<dbReference type="EC" id="2.8.4.4" evidence="1"/>
<dbReference type="EMBL" id="AM746676">
    <property type="protein sequence ID" value="CAN94433.1"/>
    <property type="molecule type" value="Genomic_DNA"/>
</dbReference>
<dbReference type="RefSeq" id="WP_012236903.1">
    <property type="nucleotide sequence ID" value="NC_010162.1"/>
</dbReference>
<dbReference type="SMR" id="A9F1Y8"/>
<dbReference type="STRING" id="448385.sce4270"/>
<dbReference type="KEGG" id="scl:sce4270"/>
<dbReference type="eggNOG" id="COG0621">
    <property type="taxonomic scope" value="Bacteria"/>
</dbReference>
<dbReference type="HOGENOM" id="CLU_018697_0_0_7"/>
<dbReference type="OrthoDB" id="9805215at2"/>
<dbReference type="BioCyc" id="SCEL448385:SCE_RS21940-MONOMER"/>
<dbReference type="Proteomes" id="UP000002139">
    <property type="component" value="Chromosome"/>
</dbReference>
<dbReference type="GO" id="GO:0005829">
    <property type="term" value="C:cytosol"/>
    <property type="evidence" value="ECO:0007669"/>
    <property type="project" value="TreeGrafter"/>
</dbReference>
<dbReference type="GO" id="GO:0051539">
    <property type="term" value="F:4 iron, 4 sulfur cluster binding"/>
    <property type="evidence" value="ECO:0007669"/>
    <property type="project" value="UniProtKB-UniRule"/>
</dbReference>
<dbReference type="GO" id="GO:0035599">
    <property type="term" value="F:aspartic acid methylthiotransferase activity"/>
    <property type="evidence" value="ECO:0007669"/>
    <property type="project" value="TreeGrafter"/>
</dbReference>
<dbReference type="GO" id="GO:0046872">
    <property type="term" value="F:metal ion binding"/>
    <property type="evidence" value="ECO:0007669"/>
    <property type="project" value="UniProtKB-KW"/>
</dbReference>
<dbReference type="GO" id="GO:0103039">
    <property type="term" value="F:protein methylthiotransferase activity"/>
    <property type="evidence" value="ECO:0007669"/>
    <property type="project" value="UniProtKB-EC"/>
</dbReference>
<dbReference type="GO" id="GO:0006400">
    <property type="term" value="P:tRNA modification"/>
    <property type="evidence" value="ECO:0007669"/>
    <property type="project" value="InterPro"/>
</dbReference>
<dbReference type="CDD" id="cd01335">
    <property type="entry name" value="Radical_SAM"/>
    <property type="match status" value="1"/>
</dbReference>
<dbReference type="FunFam" id="3.80.30.20:FF:000001">
    <property type="entry name" value="tRNA-2-methylthio-N(6)-dimethylallyladenosine synthase 2"/>
    <property type="match status" value="1"/>
</dbReference>
<dbReference type="Gene3D" id="3.40.50.12160">
    <property type="entry name" value="Methylthiotransferase, N-terminal domain"/>
    <property type="match status" value="1"/>
</dbReference>
<dbReference type="Gene3D" id="2.40.50.140">
    <property type="entry name" value="Nucleic acid-binding proteins"/>
    <property type="match status" value="1"/>
</dbReference>
<dbReference type="Gene3D" id="3.80.30.20">
    <property type="entry name" value="tm_1862 like domain"/>
    <property type="match status" value="1"/>
</dbReference>
<dbReference type="HAMAP" id="MF_01865">
    <property type="entry name" value="MTTase_RimO"/>
    <property type="match status" value="1"/>
</dbReference>
<dbReference type="InterPro" id="IPR006638">
    <property type="entry name" value="Elp3/MiaA/NifB-like_rSAM"/>
</dbReference>
<dbReference type="InterPro" id="IPR005839">
    <property type="entry name" value="Methylthiotransferase"/>
</dbReference>
<dbReference type="InterPro" id="IPR020612">
    <property type="entry name" value="Methylthiotransferase_CS"/>
</dbReference>
<dbReference type="InterPro" id="IPR013848">
    <property type="entry name" value="Methylthiotransferase_N"/>
</dbReference>
<dbReference type="InterPro" id="IPR038135">
    <property type="entry name" value="Methylthiotransferase_N_sf"/>
</dbReference>
<dbReference type="InterPro" id="IPR012340">
    <property type="entry name" value="NA-bd_OB-fold"/>
</dbReference>
<dbReference type="InterPro" id="IPR005840">
    <property type="entry name" value="Ribosomal_uS12_MeSTrfase_RimO"/>
</dbReference>
<dbReference type="InterPro" id="IPR007197">
    <property type="entry name" value="rSAM"/>
</dbReference>
<dbReference type="InterPro" id="IPR023404">
    <property type="entry name" value="rSAM_horseshoe"/>
</dbReference>
<dbReference type="InterPro" id="IPR002792">
    <property type="entry name" value="TRAM_dom"/>
</dbReference>
<dbReference type="NCBIfam" id="TIGR01125">
    <property type="entry name" value="30S ribosomal protein S12 methylthiotransferase RimO"/>
    <property type="match status" value="1"/>
</dbReference>
<dbReference type="NCBIfam" id="TIGR00089">
    <property type="entry name" value="MiaB/RimO family radical SAM methylthiotransferase"/>
    <property type="match status" value="1"/>
</dbReference>
<dbReference type="PANTHER" id="PTHR43837">
    <property type="entry name" value="RIBOSOMAL PROTEIN S12 METHYLTHIOTRANSFERASE RIMO"/>
    <property type="match status" value="1"/>
</dbReference>
<dbReference type="PANTHER" id="PTHR43837:SF1">
    <property type="entry name" value="RIBOSOMAL PROTEIN US12 METHYLTHIOTRANSFERASE RIMO"/>
    <property type="match status" value="1"/>
</dbReference>
<dbReference type="Pfam" id="PF04055">
    <property type="entry name" value="Radical_SAM"/>
    <property type="match status" value="1"/>
</dbReference>
<dbReference type="Pfam" id="PF18693">
    <property type="entry name" value="TRAM_2"/>
    <property type="match status" value="1"/>
</dbReference>
<dbReference type="Pfam" id="PF00919">
    <property type="entry name" value="UPF0004"/>
    <property type="match status" value="1"/>
</dbReference>
<dbReference type="SFLD" id="SFLDG01082">
    <property type="entry name" value="B12-binding_domain_containing"/>
    <property type="match status" value="1"/>
</dbReference>
<dbReference type="SFLD" id="SFLDS00029">
    <property type="entry name" value="Radical_SAM"/>
    <property type="match status" value="1"/>
</dbReference>
<dbReference type="SFLD" id="SFLDF00274">
    <property type="entry name" value="ribosomal_protein_S12_methylth"/>
    <property type="match status" value="1"/>
</dbReference>
<dbReference type="SMART" id="SM00729">
    <property type="entry name" value="Elp3"/>
    <property type="match status" value="1"/>
</dbReference>
<dbReference type="SUPFAM" id="SSF102114">
    <property type="entry name" value="Radical SAM enzymes"/>
    <property type="match status" value="1"/>
</dbReference>
<dbReference type="PROSITE" id="PS51449">
    <property type="entry name" value="MTTASE_N"/>
    <property type="match status" value="1"/>
</dbReference>
<dbReference type="PROSITE" id="PS01278">
    <property type="entry name" value="MTTASE_RADICAL"/>
    <property type="match status" value="1"/>
</dbReference>
<dbReference type="PROSITE" id="PS51918">
    <property type="entry name" value="RADICAL_SAM"/>
    <property type="match status" value="1"/>
</dbReference>
<dbReference type="PROSITE" id="PS50926">
    <property type="entry name" value="TRAM"/>
    <property type="match status" value="1"/>
</dbReference>
<proteinExistence type="inferred from homology"/>
<organism>
    <name type="scientific">Sorangium cellulosum (strain So ce56)</name>
    <name type="common">Polyangium cellulosum (strain So ce56)</name>
    <dbReference type="NCBI Taxonomy" id="448385"/>
    <lineage>
        <taxon>Bacteria</taxon>
        <taxon>Pseudomonadati</taxon>
        <taxon>Myxococcota</taxon>
        <taxon>Polyangia</taxon>
        <taxon>Polyangiales</taxon>
        <taxon>Polyangiaceae</taxon>
        <taxon>Sorangium</taxon>
    </lineage>
</organism>
<gene>
    <name evidence="1" type="primary">rimO</name>
    <name type="ordered locus">sce4270</name>
</gene>
<evidence type="ECO:0000255" key="1">
    <source>
        <dbReference type="HAMAP-Rule" id="MF_01865"/>
    </source>
</evidence>
<evidence type="ECO:0000255" key="2">
    <source>
        <dbReference type="PROSITE-ProRule" id="PRU01266"/>
    </source>
</evidence>
<comment type="function">
    <text evidence="1">Catalyzes the methylthiolation of an aspartic acid residue of ribosomal protein uS12.</text>
</comment>
<comment type="catalytic activity">
    <reaction evidence="1">
        <text>L-aspartate(89)-[ribosomal protein uS12]-hydrogen + (sulfur carrier)-SH + AH2 + 2 S-adenosyl-L-methionine = 3-methylsulfanyl-L-aspartate(89)-[ribosomal protein uS12]-hydrogen + (sulfur carrier)-H + 5'-deoxyadenosine + L-methionine + A + S-adenosyl-L-homocysteine + 2 H(+)</text>
        <dbReference type="Rhea" id="RHEA:37087"/>
        <dbReference type="Rhea" id="RHEA-COMP:10460"/>
        <dbReference type="Rhea" id="RHEA-COMP:10461"/>
        <dbReference type="Rhea" id="RHEA-COMP:14737"/>
        <dbReference type="Rhea" id="RHEA-COMP:14739"/>
        <dbReference type="ChEBI" id="CHEBI:13193"/>
        <dbReference type="ChEBI" id="CHEBI:15378"/>
        <dbReference type="ChEBI" id="CHEBI:17319"/>
        <dbReference type="ChEBI" id="CHEBI:17499"/>
        <dbReference type="ChEBI" id="CHEBI:29917"/>
        <dbReference type="ChEBI" id="CHEBI:29961"/>
        <dbReference type="ChEBI" id="CHEBI:57844"/>
        <dbReference type="ChEBI" id="CHEBI:57856"/>
        <dbReference type="ChEBI" id="CHEBI:59789"/>
        <dbReference type="ChEBI" id="CHEBI:64428"/>
        <dbReference type="ChEBI" id="CHEBI:73599"/>
        <dbReference type="EC" id="2.8.4.4"/>
    </reaction>
</comment>
<comment type="cofactor">
    <cofactor evidence="1">
        <name>[4Fe-4S] cluster</name>
        <dbReference type="ChEBI" id="CHEBI:49883"/>
    </cofactor>
    <text evidence="1">Binds 2 [4Fe-4S] clusters. One cluster is coordinated with 3 cysteines and an exchangeable S-adenosyl-L-methionine.</text>
</comment>
<comment type="subcellular location">
    <subcellularLocation>
        <location evidence="1">Cytoplasm</location>
    </subcellularLocation>
</comment>
<comment type="similarity">
    <text evidence="1">Belongs to the methylthiotransferase family. RimO subfamily.</text>
</comment>
<name>RIMO_SORC5</name>
<accession>A9F1Y8</accession>
<reference key="1">
    <citation type="journal article" date="2007" name="Nat. Biotechnol.">
        <title>Complete genome sequence of the myxobacterium Sorangium cellulosum.</title>
        <authorList>
            <person name="Schneiker S."/>
            <person name="Perlova O."/>
            <person name="Kaiser O."/>
            <person name="Gerth K."/>
            <person name="Alici A."/>
            <person name="Altmeyer M.O."/>
            <person name="Bartels D."/>
            <person name="Bekel T."/>
            <person name="Beyer S."/>
            <person name="Bode E."/>
            <person name="Bode H.B."/>
            <person name="Bolten C.J."/>
            <person name="Choudhuri J.V."/>
            <person name="Doss S."/>
            <person name="Elnakady Y.A."/>
            <person name="Frank B."/>
            <person name="Gaigalat L."/>
            <person name="Goesmann A."/>
            <person name="Groeger C."/>
            <person name="Gross F."/>
            <person name="Jelsbak L."/>
            <person name="Jelsbak L."/>
            <person name="Kalinowski J."/>
            <person name="Kegler C."/>
            <person name="Knauber T."/>
            <person name="Konietzny S."/>
            <person name="Kopp M."/>
            <person name="Krause L."/>
            <person name="Krug D."/>
            <person name="Linke B."/>
            <person name="Mahmud T."/>
            <person name="Martinez-Arias R."/>
            <person name="McHardy A.C."/>
            <person name="Merai M."/>
            <person name="Meyer F."/>
            <person name="Mormann S."/>
            <person name="Munoz-Dorado J."/>
            <person name="Perez J."/>
            <person name="Pradella S."/>
            <person name="Rachid S."/>
            <person name="Raddatz G."/>
            <person name="Rosenau F."/>
            <person name="Rueckert C."/>
            <person name="Sasse F."/>
            <person name="Scharfe M."/>
            <person name="Schuster S.C."/>
            <person name="Suen G."/>
            <person name="Treuner-Lange A."/>
            <person name="Velicer G.J."/>
            <person name="Vorholter F.-J."/>
            <person name="Weissman K.J."/>
            <person name="Welch R.D."/>
            <person name="Wenzel S.C."/>
            <person name="Whitworth D.E."/>
            <person name="Wilhelm S."/>
            <person name="Wittmann C."/>
            <person name="Bloecker H."/>
            <person name="Puehler A."/>
            <person name="Mueller R."/>
        </authorList>
    </citation>
    <scope>NUCLEOTIDE SEQUENCE [LARGE SCALE GENOMIC DNA]</scope>
    <source>
        <strain>So ce56</strain>
    </source>
</reference>
<keyword id="KW-0004">4Fe-4S</keyword>
<keyword id="KW-0963">Cytoplasm</keyword>
<keyword id="KW-0408">Iron</keyword>
<keyword id="KW-0411">Iron-sulfur</keyword>
<keyword id="KW-0479">Metal-binding</keyword>
<keyword id="KW-1185">Reference proteome</keyword>
<keyword id="KW-0949">S-adenosyl-L-methionine</keyword>
<keyword id="KW-0808">Transferase</keyword>
<protein>
    <recommendedName>
        <fullName evidence="1">Ribosomal protein uS12 methylthiotransferase RimO</fullName>
        <shortName evidence="1">uS12 MTTase</shortName>
        <shortName evidence="1">uS12 methylthiotransferase</shortName>
        <ecNumber evidence="1">2.8.4.4</ecNumber>
    </recommendedName>
    <alternativeName>
        <fullName evidence="1">Ribosomal protein uS12 (aspartate-C(3))-methylthiotransferase</fullName>
    </alternativeName>
    <alternativeName>
        <fullName evidence="1">Ribosome maturation factor RimO</fullName>
    </alternativeName>
</protein>
<feature type="chain" id="PRO_0000375017" description="Ribosomal protein uS12 methylthiotransferase RimO">
    <location>
        <begin position="1"/>
        <end position="488"/>
    </location>
</feature>
<feature type="domain" description="MTTase N-terminal" evidence="1">
    <location>
        <begin position="4"/>
        <end position="120"/>
    </location>
</feature>
<feature type="domain" description="Radical SAM core" evidence="2">
    <location>
        <begin position="141"/>
        <end position="377"/>
    </location>
</feature>
<feature type="domain" description="TRAM" evidence="1">
    <location>
        <begin position="380"/>
        <end position="448"/>
    </location>
</feature>
<feature type="binding site" evidence="1">
    <location>
        <position position="13"/>
    </location>
    <ligand>
        <name>[4Fe-4S] cluster</name>
        <dbReference type="ChEBI" id="CHEBI:49883"/>
        <label>1</label>
    </ligand>
</feature>
<feature type="binding site" evidence="1">
    <location>
        <position position="49"/>
    </location>
    <ligand>
        <name>[4Fe-4S] cluster</name>
        <dbReference type="ChEBI" id="CHEBI:49883"/>
        <label>1</label>
    </ligand>
</feature>
<feature type="binding site" evidence="1">
    <location>
        <position position="83"/>
    </location>
    <ligand>
        <name>[4Fe-4S] cluster</name>
        <dbReference type="ChEBI" id="CHEBI:49883"/>
        <label>1</label>
    </ligand>
</feature>
<feature type="binding site" evidence="1">
    <location>
        <position position="155"/>
    </location>
    <ligand>
        <name>[4Fe-4S] cluster</name>
        <dbReference type="ChEBI" id="CHEBI:49883"/>
        <label>2</label>
        <note>4Fe-4S-S-AdoMet</note>
    </ligand>
</feature>
<feature type="binding site" evidence="1">
    <location>
        <position position="159"/>
    </location>
    <ligand>
        <name>[4Fe-4S] cluster</name>
        <dbReference type="ChEBI" id="CHEBI:49883"/>
        <label>2</label>
        <note>4Fe-4S-S-AdoMet</note>
    </ligand>
</feature>
<feature type="binding site" evidence="1">
    <location>
        <position position="162"/>
    </location>
    <ligand>
        <name>[4Fe-4S] cluster</name>
        <dbReference type="ChEBI" id="CHEBI:49883"/>
        <label>2</label>
        <note>4Fe-4S-S-AdoMet</note>
    </ligand>
</feature>
<sequence>MSSRKVHFVSLGCPKNRVDSEVMLGVARAAGFAHVDDAAEAEVIVVNTCGFIGEAKKESIDAIFEMAQHKEHGSCKRLVVAGCLSQRHPEELAREMPEVDHFLGSSDMLKLGRVLAGDAERMLVGNPAEWLIQAGDPRTLSTPGGSAYVKIAEGCNRTCSFCVIPDLRGAQRSRPIPDVVREVEQLAAAGVREINLISQDTIAYGRDAAGRSEGGARATLAQLVERVADVPGVRWVRLFYLYPETMTDDLVELLAGHPRVVPYVDMPLQHAADAMLRRMRRGHGGDRLRRVVSTLRERVPDLTFRTAFIVGHPGETDAEFEELCDFVRWAEFERVGVFRYSDEEASRSYELEGKVPARTAASRYRRLMTLQRRISHKKSAAMIGRELEVLVEGTSDEHEYVLMGRHAGQAPEIDGQVYLSGGEVRPGEMCRVRITQASDYDLVGELLDDEESGRGAGLPPAADLGAVTAKRRVALRVLQTDGRERQQN</sequence>